<accession>A0B571</accession>
<sequence length="90" mass="9672">MTICVRVRVSGRVQGVGYRYYTTTHAKALGVKGWIRNLPGGGVEAVLEGERKSVGELLGLMKSGPSGAMVSGMEIAEVECKGHDDFKIIY</sequence>
<comment type="catalytic activity">
    <reaction>
        <text>an acyl phosphate + H2O = a carboxylate + phosphate + H(+)</text>
        <dbReference type="Rhea" id="RHEA:14965"/>
        <dbReference type="ChEBI" id="CHEBI:15377"/>
        <dbReference type="ChEBI" id="CHEBI:15378"/>
        <dbReference type="ChEBI" id="CHEBI:29067"/>
        <dbReference type="ChEBI" id="CHEBI:43474"/>
        <dbReference type="ChEBI" id="CHEBI:59918"/>
        <dbReference type="EC" id="3.6.1.7"/>
    </reaction>
</comment>
<comment type="similarity">
    <text evidence="2">Belongs to the acylphosphatase family.</text>
</comment>
<keyword id="KW-0378">Hydrolase</keyword>
<keyword id="KW-1185">Reference proteome</keyword>
<gene>
    <name type="primary">acyP</name>
    <name type="ordered locus">Mthe_0042</name>
</gene>
<proteinExistence type="inferred from homology"/>
<feature type="chain" id="PRO_0000326861" description="Acylphosphatase">
    <location>
        <begin position="1"/>
        <end position="90"/>
    </location>
</feature>
<feature type="domain" description="Acylphosphatase-like" evidence="1">
    <location>
        <begin position="4"/>
        <end position="90"/>
    </location>
</feature>
<feature type="active site" evidence="1">
    <location>
        <position position="19"/>
    </location>
</feature>
<feature type="active site" evidence="1">
    <location>
        <position position="37"/>
    </location>
</feature>
<name>ACYP_METTP</name>
<protein>
    <recommendedName>
        <fullName>Acylphosphatase</fullName>
        <ecNumber>3.6.1.7</ecNumber>
    </recommendedName>
    <alternativeName>
        <fullName>Acylphosphate phosphohydrolase</fullName>
    </alternativeName>
</protein>
<evidence type="ECO:0000255" key="1">
    <source>
        <dbReference type="PROSITE-ProRule" id="PRU00520"/>
    </source>
</evidence>
<evidence type="ECO:0000305" key="2"/>
<reference key="1">
    <citation type="submission" date="2006-10" db="EMBL/GenBank/DDBJ databases">
        <title>Complete sequence of Methanosaeta thermophila PT.</title>
        <authorList>
            <consortium name="US DOE Joint Genome Institute"/>
            <person name="Copeland A."/>
            <person name="Lucas S."/>
            <person name="Lapidus A."/>
            <person name="Barry K."/>
            <person name="Detter J.C."/>
            <person name="Glavina del Rio T."/>
            <person name="Hammon N."/>
            <person name="Israni S."/>
            <person name="Pitluck S."/>
            <person name="Chain P."/>
            <person name="Malfatti S."/>
            <person name="Shin M."/>
            <person name="Vergez L."/>
            <person name="Schmutz J."/>
            <person name="Larimer F."/>
            <person name="Land M."/>
            <person name="Hauser L."/>
            <person name="Kyrpides N."/>
            <person name="Kim E."/>
            <person name="Smith K.S."/>
            <person name="Ingram-Smith C."/>
            <person name="Richardson P."/>
        </authorList>
    </citation>
    <scope>NUCLEOTIDE SEQUENCE [LARGE SCALE GENOMIC DNA]</scope>
    <source>
        <strain>DSM 6194 / JCM 14653 / NBRC 101360 / PT</strain>
    </source>
</reference>
<organism>
    <name type="scientific">Methanothrix thermoacetophila (strain DSM 6194 / JCM 14653 / NBRC 101360 / PT)</name>
    <name type="common">Methanosaeta thermophila</name>
    <dbReference type="NCBI Taxonomy" id="349307"/>
    <lineage>
        <taxon>Archaea</taxon>
        <taxon>Methanobacteriati</taxon>
        <taxon>Methanobacteriota</taxon>
        <taxon>Stenosarchaea group</taxon>
        <taxon>Methanomicrobia</taxon>
        <taxon>Methanotrichales</taxon>
        <taxon>Methanotrichaceae</taxon>
        <taxon>Methanothrix</taxon>
    </lineage>
</organism>
<dbReference type="EC" id="3.6.1.7"/>
<dbReference type="EMBL" id="CP000477">
    <property type="protein sequence ID" value="ABK13845.1"/>
    <property type="molecule type" value="Genomic_DNA"/>
</dbReference>
<dbReference type="RefSeq" id="WP_011695246.1">
    <property type="nucleotide sequence ID" value="NC_008553.1"/>
</dbReference>
<dbReference type="SMR" id="A0B571"/>
<dbReference type="STRING" id="349307.Mthe_0042"/>
<dbReference type="GeneID" id="4462734"/>
<dbReference type="KEGG" id="mtp:Mthe_0042"/>
<dbReference type="HOGENOM" id="CLU_141932_3_2_2"/>
<dbReference type="OrthoDB" id="6643at2157"/>
<dbReference type="Proteomes" id="UP000000674">
    <property type="component" value="Chromosome"/>
</dbReference>
<dbReference type="GO" id="GO:0003998">
    <property type="term" value="F:acylphosphatase activity"/>
    <property type="evidence" value="ECO:0007669"/>
    <property type="project" value="UniProtKB-EC"/>
</dbReference>
<dbReference type="Gene3D" id="3.30.70.100">
    <property type="match status" value="1"/>
</dbReference>
<dbReference type="InterPro" id="IPR020456">
    <property type="entry name" value="Acylphosphatase"/>
</dbReference>
<dbReference type="InterPro" id="IPR001792">
    <property type="entry name" value="Acylphosphatase-like_dom"/>
</dbReference>
<dbReference type="InterPro" id="IPR036046">
    <property type="entry name" value="Acylphosphatase-like_dom_sf"/>
</dbReference>
<dbReference type="PANTHER" id="PTHR47268">
    <property type="entry name" value="ACYLPHOSPHATASE"/>
    <property type="match status" value="1"/>
</dbReference>
<dbReference type="PANTHER" id="PTHR47268:SF4">
    <property type="entry name" value="ACYLPHOSPHATASE"/>
    <property type="match status" value="1"/>
</dbReference>
<dbReference type="Pfam" id="PF00708">
    <property type="entry name" value="Acylphosphatase"/>
    <property type="match status" value="1"/>
</dbReference>
<dbReference type="PRINTS" id="PR00112">
    <property type="entry name" value="ACYLPHPHTASE"/>
</dbReference>
<dbReference type="SUPFAM" id="SSF54975">
    <property type="entry name" value="Acylphosphatase/BLUF domain-like"/>
    <property type="match status" value="1"/>
</dbReference>
<dbReference type="PROSITE" id="PS51160">
    <property type="entry name" value="ACYLPHOSPHATASE_3"/>
    <property type="match status" value="1"/>
</dbReference>